<evidence type="ECO:0000255" key="1">
    <source>
        <dbReference type="HAMAP-Rule" id="MF_00057"/>
    </source>
</evidence>
<evidence type="ECO:0007829" key="2">
    <source>
        <dbReference type="PDB" id="4XWI"/>
    </source>
</evidence>
<gene>
    <name evidence="1" type="primary">kdsB</name>
    <name type="ordered locus">PA2979</name>
</gene>
<feature type="chain" id="PRO_0000188510" description="3-deoxy-manno-octulosonate cytidylyltransferase">
    <location>
        <begin position="1"/>
        <end position="254"/>
    </location>
</feature>
<feature type="strand" evidence="2">
    <location>
        <begin position="6"/>
        <end position="11"/>
    </location>
</feature>
<feature type="strand" evidence="2">
    <location>
        <begin position="16"/>
        <end position="18"/>
    </location>
</feature>
<feature type="helix" evidence="2">
    <location>
        <begin position="21"/>
        <end position="23"/>
    </location>
</feature>
<feature type="strand" evidence="2">
    <location>
        <begin position="24"/>
        <end position="26"/>
    </location>
</feature>
<feature type="helix" evidence="2">
    <location>
        <begin position="31"/>
        <end position="40"/>
    </location>
</feature>
<feature type="strand" evidence="2">
    <location>
        <begin position="45"/>
        <end position="52"/>
    </location>
</feature>
<feature type="helix" evidence="2">
    <location>
        <begin position="54"/>
        <end position="62"/>
    </location>
</feature>
<feature type="strand" evidence="2">
    <location>
        <begin position="66"/>
        <end position="69"/>
    </location>
</feature>
<feature type="helix" evidence="2">
    <location>
        <begin position="77"/>
        <end position="88"/>
    </location>
</feature>
<feature type="strand" evidence="2">
    <location>
        <begin position="95"/>
        <end position="98"/>
    </location>
</feature>
<feature type="helix" evidence="2">
    <location>
        <begin position="108"/>
        <end position="120"/>
    </location>
</feature>
<feature type="strand" evidence="2">
    <location>
        <begin position="125"/>
        <end position="132"/>
    </location>
</feature>
<feature type="helix" evidence="2">
    <location>
        <begin position="136"/>
        <end position="139"/>
    </location>
</feature>
<feature type="strand" evidence="2">
    <location>
        <begin position="146"/>
        <end position="149"/>
    </location>
</feature>
<feature type="strand" evidence="2">
    <location>
        <begin position="153"/>
        <end position="161"/>
    </location>
</feature>
<feature type="helix" evidence="2">
    <location>
        <begin position="167"/>
        <end position="172"/>
    </location>
</feature>
<feature type="strand" evidence="2">
    <location>
        <begin position="174"/>
        <end position="176"/>
    </location>
</feature>
<feature type="strand" evidence="2">
    <location>
        <begin position="184"/>
        <end position="193"/>
    </location>
</feature>
<feature type="helix" evidence="2">
    <location>
        <begin position="194"/>
        <end position="203"/>
    </location>
</feature>
<feature type="helix" evidence="2">
    <location>
        <begin position="207"/>
        <end position="212"/>
    </location>
</feature>
<feature type="helix" evidence="2">
    <location>
        <begin position="216"/>
        <end position="221"/>
    </location>
</feature>
<feature type="strand" evidence="2">
    <location>
        <begin position="226"/>
        <end position="230"/>
    </location>
</feature>
<feature type="helix" evidence="2">
    <location>
        <begin position="242"/>
        <end position="251"/>
    </location>
</feature>
<proteinExistence type="evidence at protein level"/>
<dbReference type="EC" id="2.7.7.38" evidence="1"/>
<dbReference type="EMBL" id="AE004091">
    <property type="protein sequence ID" value="AAG06367.1"/>
    <property type="molecule type" value="Genomic_DNA"/>
</dbReference>
<dbReference type="PIR" id="C83274">
    <property type="entry name" value="C83274"/>
</dbReference>
<dbReference type="RefSeq" id="NP_251669.1">
    <property type="nucleotide sequence ID" value="NC_002516.2"/>
</dbReference>
<dbReference type="RefSeq" id="WP_003106922.1">
    <property type="nucleotide sequence ID" value="NZ_QZGE01000009.1"/>
</dbReference>
<dbReference type="PDB" id="4XWI">
    <property type="method" value="X-ray"/>
    <property type="resolution" value="1.92 A"/>
    <property type="chains" value="A/B=1-254"/>
</dbReference>
<dbReference type="PDBsum" id="4XWI"/>
<dbReference type="SMR" id="Q9HZM5"/>
<dbReference type="FunCoup" id="Q9HZM5">
    <property type="interactions" value="504"/>
</dbReference>
<dbReference type="STRING" id="208964.PA2979"/>
<dbReference type="PaxDb" id="208964-PA2979"/>
<dbReference type="GeneID" id="880169"/>
<dbReference type="KEGG" id="pae:PA2979"/>
<dbReference type="PATRIC" id="fig|208964.12.peg.3126"/>
<dbReference type="PseudoCAP" id="PA2979"/>
<dbReference type="HOGENOM" id="CLU_065038_1_0_6"/>
<dbReference type="InParanoid" id="Q9HZM5"/>
<dbReference type="OrthoDB" id="9815559at2"/>
<dbReference type="PhylomeDB" id="Q9HZM5"/>
<dbReference type="BioCyc" id="PAER208964:G1FZ6-3031-MONOMER"/>
<dbReference type="UniPathway" id="UPA00030"/>
<dbReference type="UniPathway" id="UPA00358">
    <property type="reaction ID" value="UER00476"/>
</dbReference>
<dbReference type="EvolutionaryTrace" id="Q9HZM5"/>
<dbReference type="Proteomes" id="UP000002438">
    <property type="component" value="Chromosome"/>
</dbReference>
<dbReference type="GO" id="GO:0005829">
    <property type="term" value="C:cytosol"/>
    <property type="evidence" value="ECO:0000318"/>
    <property type="project" value="GO_Central"/>
</dbReference>
<dbReference type="GO" id="GO:0008690">
    <property type="term" value="F:3-deoxy-manno-octulosonate cytidylyltransferase activity"/>
    <property type="evidence" value="ECO:0000318"/>
    <property type="project" value="GO_Central"/>
</dbReference>
<dbReference type="GO" id="GO:0033468">
    <property type="term" value="P:CMP-keto-3-deoxy-D-manno-octulosonic acid biosynthetic process"/>
    <property type="evidence" value="ECO:0007669"/>
    <property type="project" value="UniProtKB-UniRule"/>
</dbReference>
<dbReference type="GO" id="GO:0009103">
    <property type="term" value="P:lipopolysaccharide biosynthetic process"/>
    <property type="evidence" value="ECO:0007669"/>
    <property type="project" value="UniProtKB-UniRule"/>
</dbReference>
<dbReference type="CDD" id="cd02517">
    <property type="entry name" value="CMP-KDO-Synthetase"/>
    <property type="match status" value="1"/>
</dbReference>
<dbReference type="FunFam" id="3.90.550.10:FF:000011">
    <property type="entry name" value="3-deoxy-manno-octulosonate cytidylyltransferase"/>
    <property type="match status" value="1"/>
</dbReference>
<dbReference type="Gene3D" id="3.90.550.10">
    <property type="entry name" value="Spore Coat Polysaccharide Biosynthesis Protein SpsA, Chain A"/>
    <property type="match status" value="1"/>
</dbReference>
<dbReference type="HAMAP" id="MF_00057">
    <property type="entry name" value="KdsB"/>
    <property type="match status" value="1"/>
</dbReference>
<dbReference type="InterPro" id="IPR003329">
    <property type="entry name" value="Cytidylyl_trans"/>
</dbReference>
<dbReference type="InterPro" id="IPR004528">
    <property type="entry name" value="KdsB"/>
</dbReference>
<dbReference type="InterPro" id="IPR029044">
    <property type="entry name" value="Nucleotide-diphossugar_trans"/>
</dbReference>
<dbReference type="NCBIfam" id="TIGR00466">
    <property type="entry name" value="kdsB"/>
    <property type="match status" value="1"/>
</dbReference>
<dbReference type="NCBIfam" id="NF003950">
    <property type="entry name" value="PRK05450.1-3"/>
    <property type="match status" value="1"/>
</dbReference>
<dbReference type="NCBIfam" id="NF003952">
    <property type="entry name" value="PRK05450.1-5"/>
    <property type="match status" value="1"/>
</dbReference>
<dbReference type="NCBIfam" id="NF009905">
    <property type="entry name" value="PRK13368.1"/>
    <property type="match status" value="1"/>
</dbReference>
<dbReference type="PANTHER" id="PTHR42866">
    <property type="entry name" value="3-DEOXY-MANNO-OCTULOSONATE CYTIDYLYLTRANSFERASE"/>
    <property type="match status" value="1"/>
</dbReference>
<dbReference type="PANTHER" id="PTHR42866:SF2">
    <property type="entry name" value="3-DEOXY-MANNO-OCTULOSONATE CYTIDYLYLTRANSFERASE, MITOCHONDRIAL"/>
    <property type="match status" value="1"/>
</dbReference>
<dbReference type="Pfam" id="PF02348">
    <property type="entry name" value="CTP_transf_3"/>
    <property type="match status" value="1"/>
</dbReference>
<dbReference type="SUPFAM" id="SSF53448">
    <property type="entry name" value="Nucleotide-diphospho-sugar transferases"/>
    <property type="match status" value="1"/>
</dbReference>
<keyword id="KW-0002">3D-structure</keyword>
<keyword id="KW-0963">Cytoplasm</keyword>
<keyword id="KW-0448">Lipopolysaccharide biosynthesis</keyword>
<keyword id="KW-0548">Nucleotidyltransferase</keyword>
<keyword id="KW-1185">Reference proteome</keyword>
<keyword id="KW-0808">Transferase</keyword>
<sequence>MTQAFTVVIPARYASTRLPGKPLQDIAGQPMIQRVWNQARKSAASRVVVATDDERILAACQGFGAEALLTRAEHNSGTDRLEEVASRLGLASDAIVVNVQGDEPLIPPALIDQVAANLAAHPEAAIATLAEPIHEVSALFNPNVVKVATDIDGLALTFSRAPLPWARDAFARDRDSLPEGVPYRRHIGIYAYRVGFLADFVAWGPCWLENAESLEQLRALWHGVRIHVADARENMLPGVDTPEDLERVRRVLGG</sequence>
<reference key="1">
    <citation type="journal article" date="2000" name="Nature">
        <title>Complete genome sequence of Pseudomonas aeruginosa PAO1, an opportunistic pathogen.</title>
        <authorList>
            <person name="Stover C.K."/>
            <person name="Pham X.-Q.T."/>
            <person name="Erwin A.L."/>
            <person name="Mizoguchi S.D."/>
            <person name="Warrener P."/>
            <person name="Hickey M.J."/>
            <person name="Brinkman F.S.L."/>
            <person name="Hufnagle W.O."/>
            <person name="Kowalik D.J."/>
            <person name="Lagrou M."/>
            <person name="Garber R.L."/>
            <person name="Goltry L."/>
            <person name="Tolentino E."/>
            <person name="Westbrock-Wadman S."/>
            <person name="Yuan Y."/>
            <person name="Brody L.L."/>
            <person name="Coulter S.N."/>
            <person name="Folger K.R."/>
            <person name="Kas A."/>
            <person name="Larbig K."/>
            <person name="Lim R.M."/>
            <person name="Smith K.A."/>
            <person name="Spencer D.H."/>
            <person name="Wong G.K.-S."/>
            <person name="Wu Z."/>
            <person name="Paulsen I.T."/>
            <person name="Reizer J."/>
            <person name="Saier M.H. Jr."/>
            <person name="Hancock R.E.W."/>
            <person name="Lory S."/>
            <person name="Olson M.V."/>
        </authorList>
    </citation>
    <scope>NUCLEOTIDE SEQUENCE [LARGE SCALE GENOMIC DNA]</scope>
    <source>
        <strain>ATCC 15692 / DSM 22644 / CIP 104116 / JCM 14847 / LMG 12228 / 1C / PRS 101 / PAO1</strain>
    </source>
</reference>
<comment type="function">
    <text evidence="1">Activates KDO (a required 8-carbon sugar) for incorporation into bacterial lipopolysaccharide in Gram-negative bacteria.</text>
</comment>
<comment type="catalytic activity">
    <reaction evidence="1">
        <text>3-deoxy-alpha-D-manno-oct-2-ulosonate + CTP = CMP-3-deoxy-beta-D-manno-octulosonate + diphosphate</text>
        <dbReference type="Rhea" id="RHEA:23448"/>
        <dbReference type="ChEBI" id="CHEBI:33019"/>
        <dbReference type="ChEBI" id="CHEBI:37563"/>
        <dbReference type="ChEBI" id="CHEBI:85986"/>
        <dbReference type="ChEBI" id="CHEBI:85987"/>
        <dbReference type="EC" id="2.7.7.38"/>
    </reaction>
</comment>
<comment type="pathway">
    <text evidence="1">Nucleotide-sugar biosynthesis; CMP-3-deoxy-D-manno-octulosonate biosynthesis; CMP-3-deoxy-D-manno-octulosonate from 3-deoxy-D-manno-octulosonate and CTP: step 1/1.</text>
</comment>
<comment type="pathway">
    <text evidence="1">Bacterial outer membrane biogenesis; lipopolysaccharide biosynthesis.</text>
</comment>
<comment type="subcellular location">
    <subcellularLocation>
        <location evidence="1">Cytoplasm</location>
    </subcellularLocation>
</comment>
<comment type="similarity">
    <text evidence="1">Belongs to the KdsB family.</text>
</comment>
<name>KDSB_PSEAE</name>
<organism>
    <name type="scientific">Pseudomonas aeruginosa (strain ATCC 15692 / DSM 22644 / CIP 104116 / JCM 14847 / LMG 12228 / 1C / PRS 101 / PAO1)</name>
    <dbReference type="NCBI Taxonomy" id="208964"/>
    <lineage>
        <taxon>Bacteria</taxon>
        <taxon>Pseudomonadati</taxon>
        <taxon>Pseudomonadota</taxon>
        <taxon>Gammaproteobacteria</taxon>
        <taxon>Pseudomonadales</taxon>
        <taxon>Pseudomonadaceae</taxon>
        <taxon>Pseudomonas</taxon>
    </lineage>
</organism>
<accession>Q9HZM5</accession>
<protein>
    <recommendedName>
        <fullName evidence="1">3-deoxy-manno-octulosonate cytidylyltransferase</fullName>
        <ecNumber evidence="1">2.7.7.38</ecNumber>
    </recommendedName>
    <alternativeName>
        <fullName evidence="1">CMP-2-keto-3-deoxyoctulosonic acid synthase</fullName>
        <shortName evidence="1">CKS</shortName>
        <shortName evidence="1">CMP-KDO synthase</shortName>
    </alternativeName>
</protein>